<evidence type="ECO:0000255" key="1">
    <source>
        <dbReference type="HAMAP-Rule" id="MF_00090"/>
    </source>
</evidence>
<feature type="chain" id="PRO_0000351965" description="Protein-L-isoaspartate O-methyltransferase">
    <location>
        <begin position="1"/>
        <end position="241"/>
    </location>
</feature>
<feature type="active site" evidence="1">
    <location>
        <position position="69"/>
    </location>
</feature>
<sequence>MAPWTRDEEWFREARRRLVERLVREGYIRSEHVKRAMLRVPRELFVPDELRHLAYEDTPLPIGHGQTISAPHMVAMMTEYADLKPGMKVLEVGAGSGYHAAVMAEVVAPSDEPREHWGHVYTIERIPELAEFARRNLERAGYADRVTVIVGDGSRGYPEKAPYDRIIVTAAAPDIPGPLIDQLKPGGKMVIPIGDRYLQHLYVVVKTRDGKIESRPVTPCLFVPLVGEYGWREYEADTTLA</sequence>
<proteinExistence type="inferred from homology"/>
<dbReference type="EC" id="2.1.1.77" evidence="1"/>
<dbReference type="EMBL" id="CP000493">
    <property type="protein sequence ID" value="ABM80489.1"/>
    <property type="molecule type" value="Genomic_DNA"/>
</dbReference>
<dbReference type="RefSeq" id="WP_011821807.1">
    <property type="nucleotide sequence ID" value="NC_008818.1"/>
</dbReference>
<dbReference type="SMR" id="A2BKH8"/>
<dbReference type="STRING" id="415426.Hbut_0632"/>
<dbReference type="EnsemblBacteria" id="ABM80489">
    <property type="protein sequence ID" value="ABM80489"/>
    <property type="gene ID" value="Hbut_0632"/>
</dbReference>
<dbReference type="GeneID" id="4781821"/>
<dbReference type="KEGG" id="hbu:Hbut_0632"/>
<dbReference type="eggNOG" id="arCOG00976">
    <property type="taxonomic scope" value="Archaea"/>
</dbReference>
<dbReference type="HOGENOM" id="CLU_055432_2_0_2"/>
<dbReference type="OrthoDB" id="33618at2157"/>
<dbReference type="Proteomes" id="UP000002593">
    <property type="component" value="Chromosome"/>
</dbReference>
<dbReference type="GO" id="GO:0005737">
    <property type="term" value="C:cytoplasm"/>
    <property type="evidence" value="ECO:0007669"/>
    <property type="project" value="UniProtKB-SubCell"/>
</dbReference>
<dbReference type="GO" id="GO:0004719">
    <property type="term" value="F:protein-L-isoaspartate (D-aspartate) O-methyltransferase activity"/>
    <property type="evidence" value="ECO:0007669"/>
    <property type="project" value="UniProtKB-UniRule"/>
</dbReference>
<dbReference type="GO" id="GO:0032259">
    <property type="term" value="P:methylation"/>
    <property type="evidence" value="ECO:0007669"/>
    <property type="project" value="UniProtKB-KW"/>
</dbReference>
<dbReference type="GO" id="GO:0036211">
    <property type="term" value="P:protein modification process"/>
    <property type="evidence" value="ECO:0007669"/>
    <property type="project" value="UniProtKB-UniRule"/>
</dbReference>
<dbReference type="GO" id="GO:0030091">
    <property type="term" value="P:protein repair"/>
    <property type="evidence" value="ECO:0007669"/>
    <property type="project" value="UniProtKB-UniRule"/>
</dbReference>
<dbReference type="CDD" id="cd02440">
    <property type="entry name" value="AdoMet_MTases"/>
    <property type="match status" value="1"/>
</dbReference>
<dbReference type="FunFam" id="3.40.50.150:FF:000010">
    <property type="entry name" value="Protein-L-isoaspartate O-methyltransferase"/>
    <property type="match status" value="1"/>
</dbReference>
<dbReference type="Gene3D" id="3.40.50.150">
    <property type="entry name" value="Vaccinia Virus protein VP39"/>
    <property type="match status" value="1"/>
</dbReference>
<dbReference type="HAMAP" id="MF_00090">
    <property type="entry name" value="PIMT"/>
    <property type="match status" value="1"/>
</dbReference>
<dbReference type="InterPro" id="IPR000682">
    <property type="entry name" value="PCMT"/>
</dbReference>
<dbReference type="InterPro" id="IPR029063">
    <property type="entry name" value="SAM-dependent_MTases_sf"/>
</dbReference>
<dbReference type="NCBIfam" id="TIGR00080">
    <property type="entry name" value="pimt"/>
    <property type="match status" value="1"/>
</dbReference>
<dbReference type="NCBIfam" id="NF001453">
    <property type="entry name" value="PRK00312.1"/>
    <property type="match status" value="1"/>
</dbReference>
<dbReference type="NCBIfam" id="NF010549">
    <property type="entry name" value="PRK13942.1"/>
    <property type="match status" value="1"/>
</dbReference>
<dbReference type="PANTHER" id="PTHR11579">
    <property type="entry name" value="PROTEIN-L-ISOASPARTATE O-METHYLTRANSFERASE"/>
    <property type="match status" value="1"/>
</dbReference>
<dbReference type="PANTHER" id="PTHR11579:SF0">
    <property type="entry name" value="PROTEIN-L-ISOASPARTATE(D-ASPARTATE) O-METHYLTRANSFERASE"/>
    <property type="match status" value="1"/>
</dbReference>
<dbReference type="Pfam" id="PF01135">
    <property type="entry name" value="PCMT"/>
    <property type="match status" value="1"/>
</dbReference>
<dbReference type="SUPFAM" id="SSF53335">
    <property type="entry name" value="S-adenosyl-L-methionine-dependent methyltransferases"/>
    <property type="match status" value="1"/>
</dbReference>
<dbReference type="PROSITE" id="PS01279">
    <property type="entry name" value="PCMT"/>
    <property type="match status" value="1"/>
</dbReference>
<keyword id="KW-0963">Cytoplasm</keyword>
<keyword id="KW-0489">Methyltransferase</keyword>
<keyword id="KW-1185">Reference proteome</keyword>
<keyword id="KW-0949">S-adenosyl-L-methionine</keyword>
<keyword id="KW-0808">Transferase</keyword>
<organism>
    <name type="scientific">Hyperthermus butylicus (strain DSM 5456 / JCM 9403 / PLM1-5)</name>
    <dbReference type="NCBI Taxonomy" id="415426"/>
    <lineage>
        <taxon>Archaea</taxon>
        <taxon>Thermoproteota</taxon>
        <taxon>Thermoprotei</taxon>
        <taxon>Desulfurococcales</taxon>
        <taxon>Pyrodictiaceae</taxon>
        <taxon>Hyperthermus</taxon>
    </lineage>
</organism>
<protein>
    <recommendedName>
        <fullName evidence="1">Protein-L-isoaspartate O-methyltransferase</fullName>
        <ecNumber evidence="1">2.1.1.77</ecNumber>
    </recommendedName>
    <alternativeName>
        <fullName evidence="1">L-isoaspartyl protein carboxyl methyltransferase</fullName>
    </alternativeName>
    <alternativeName>
        <fullName evidence="1">Protein L-isoaspartyl methyltransferase</fullName>
    </alternativeName>
    <alternativeName>
        <fullName evidence="1">Protein-beta-aspartate methyltransferase</fullName>
        <shortName evidence="1">PIMT</shortName>
    </alternativeName>
</protein>
<gene>
    <name evidence="1" type="primary">pcm</name>
    <name type="ordered locus">Hbut_0632</name>
</gene>
<accession>A2BKH8</accession>
<name>PIMT_HYPBU</name>
<reference key="1">
    <citation type="journal article" date="2007" name="Archaea">
        <title>The genome of Hyperthermus butylicus: a sulfur-reducing, peptide fermenting, neutrophilic Crenarchaeote growing up to 108 degrees C.</title>
        <authorList>
            <person name="Bruegger K."/>
            <person name="Chen L."/>
            <person name="Stark M."/>
            <person name="Zibat A."/>
            <person name="Redder P."/>
            <person name="Ruepp A."/>
            <person name="Awayez M."/>
            <person name="She Q."/>
            <person name="Garrett R.A."/>
            <person name="Klenk H.-P."/>
        </authorList>
    </citation>
    <scope>NUCLEOTIDE SEQUENCE [LARGE SCALE GENOMIC DNA]</scope>
    <source>
        <strain>DSM 5456 / JCM 9403 / PLM1-5</strain>
    </source>
</reference>
<comment type="function">
    <text evidence="1">Catalyzes the methyl esterification of L-isoaspartyl residues in peptides and proteins that result from spontaneous decomposition of normal L-aspartyl and L-asparaginyl residues. It plays a role in the repair and/or degradation of damaged proteins.</text>
</comment>
<comment type="catalytic activity">
    <reaction evidence="1">
        <text>[protein]-L-isoaspartate + S-adenosyl-L-methionine = [protein]-L-isoaspartate alpha-methyl ester + S-adenosyl-L-homocysteine</text>
        <dbReference type="Rhea" id="RHEA:12705"/>
        <dbReference type="Rhea" id="RHEA-COMP:12143"/>
        <dbReference type="Rhea" id="RHEA-COMP:12144"/>
        <dbReference type="ChEBI" id="CHEBI:57856"/>
        <dbReference type="ChEBI" id="CHEBI:59789"/>
        <dbReference type="ChEBI" id="CHEBI:90596"/>
        <dbReference type="ChEBI" id="CHEBI:90598"/>
        <dbReference type="EC" id="2.1.1.77"/>
    </reaction>
</comment>
<comment type="subcellular location">
    <subcellularLocation>
        <location evidence="1">Cytoplasm</location>
    </subcellularLocation>
</comment>
<comment type="similarity">
    <text evidence="1">Belongs to the methyltransferase superfamily. L-isoaspartyl/D-aspartyl protein methyltransferase family.</text>
</comment>